<keyword id="KW-1185">Reference proteome</keyword>
<keyword id="KW-0687">Ribonucleoprotein</keyword>
<keyword id="KW-0689">Ribosomal protein</keyword>
<protein>
    <recommendedName>
        <fullName evidence="2">Large ribosomal subunit protein bL34</fullName>
    </recommendedName>
    <alternativeName>
        <fullName>50S ribosomal protein L34</fullName>
    </alternativeName>
</protein>
<evidence type="ECO:0000256" key="1">
    <source>
        <dbReference type="SAM" id="MobiDB-lite"/>
    </source>
</evidence>
<evidence type="ECO:0000305" key="2"/>
<comment type="similarity">
    <text evidence="2">Belongs to the bacterial ribosomal protein bL34 family.</text>
</comment>
<name>RL34_HALH5</name>
<gene>
    <name type="primary">rpmH</name>
    <name type="ordered locus">BH4066</name>
</gene>
<organism>
    <name type="scientific">Halalkalibacterium halodurans (strain ATCC BAA-125 / DSM 18197 / FERM 7344 / JCM 9153 / C-125)</name>
    <name type="common">Bacillus halodurans</name>
    <dbReference type="NCBI Taxonomy" id="272558"/>
    <lineage>
        <taxon>Bacteria</taxon>
        <taxon>Bacillati</taxon>
        <taxon>Bacillota</taxon>
        <taxon>Bacilli</taxon>
        <taxon>Bacillales</taxon>
        <taxon>Bacillaceae</taxon>
        <taxon>Halalkalibacterium (ex Joshi et al. 2022)</taxon>
    </lineage>
</organism>
<dbReference type="EMBL" id="AB013492">
    <property type="protein sequence ID" value="BAA82684.1"/>
    <property type="molecule type" value="Genomic_DNA"/>
</dbReference>
<dbReference type="EMBL" id="BA000004">
    <property type="protein sequence ID" value="BAB07785.1"/>
    <property type="molecule type" value="Genomic_DNA"/>
</dbReference>
<dbReference type="PIR" id="B84158">
    <property type="entry name" value="B84158"/>
</dbReference>
<dbReference type="RefSeq" id="WP_010900190.1">
    <property type="nucleotide sequence ID" value="NC_002570.2"/>
</dbReference>
<dbReference type="SMR" id="Q9RCA3"/>
<dbReference type="STRING" id="272558.gene:10729984"/>
<dbReference type="GeneID" id="87599649"/>
<dbReference type="KEGG" id="bha:BH4066"/>
<dbReference type="eggNOG" id="COG0230">
    <property type="taxonomic scope" value="Bacteria"/>
</dbReference>
<dbReference type="HOGENOM" id="CLU_129938_2_0_9"/>
<dbReference type="OrthoDB" id="9804164at2"/>
<dbReference type="Proteomes" id="UP000001258">
    <property type="component" value="Chromosome"/>
</dbReference>
<dbReference type="GO" id="GO:1990904">
    <property type="term" value="C:ribonucleoprotein complex"/>
    <property type="evidence" value="ECO:0007669"/>
    <property type="project" value="UniProtKB-KW"/>
</dbReference>
<dbReference type="GO" id="GO:0005840">
    <property type="term" value="C:ribosome"/>
    <property type="evidence" value="ECO:0007669"/>
    <property type="project" value="UniProtKB-KW"/>
</dbReference>
<dbReference type="GO" id="GO:0003735">
    <property type="term" value="F:structural constituent of ribosome"/>
    <property type="evidence" value="ECO:0007669"/>
    <property type="project" value="InterPro"/>
</dbReference>
<dbReference type="GO" id="GO:0006412">
    <property type="term" value="P:translation"/>
    <property type="evidence" value="ECO:0007669"/>
    <property type="project" value="UniProtKB-UniRule"/>
</dbReference>
<dbReference type="FunFam" id="1.10.287.3980:FF:000001">
    <property type="entry name" value="Mitochondrial ribosomal protein L34"/>
    <property type="match status" value="1"/>
</dbReference>
<dbReference type="Gene3D" id="1.10.287.3980">
    <property type="match status" value="1"/>
</dbReference>
<dbReference type="HAMAP" id="MF_00391">
    <property type="entry name" value="Ribosomal_bL34"/>
    <property type="match status" value="1"/>
</dbReference>
<dbReference type="InterPro" id="IPR000271">
    <property type="entry name" value="Ribosomal_bL34"/>
</dbReference>
<dbReference type="InterPro" id="IPR020939">
    <property type="entry name" value="Ribosomal_bL34_CS"/>
</dbReference>
<dbReference type="NCBIfam" id="TIGR01030">
    <property type="entry name" value="rpmH_bact"/>
    <property type="match status" value="1"/>
</dbReference>
<dbReference type="PANTHER" id="PTHR14503:SF4">
    <property type="entry name" value="LARGE RIBOSOMAL SUBUNIT PROTEIN BL34M"/>
    <property type="match status" value="1"/>
</dbReference>
<dbReference type="PANTHER" id="PTHR14503">
    <property type="entry name" value="MITOCHONDRIAL RIBOSOMAL PROTEIN 34 FAMILY MEMBER"/>
    <property type="match status" value="1"/>
</dbReference>
<dbReference type="Pfam" id="PF00468">
    <property type="entry name" value="Ribosomal_L34"/>
    <property type="match status" value="1"/>
</dbReference>
<dbReference type="PROSITE" id="PS00784">
    <property type="entry name" value="RIBOSOMAL_L34"/>
    <property type="match status" value="1"/>
</dbReference>
<proteinExistence type="inferred from homology"/>
<feature type="chain" id="PRO_0000187337" description="Large ribosomal subunit protein bL34">
    <location>
        <begin position="1"/>
        <end position="45"/>
    </location>
</feature>
<feature type="region of interest" description="Disordered" evidence="1">
    <location>
        <begin position="1"/>
        <end position="45"/>
    </location>
</feature>
<feature type="compositionally biased region" description="Basic residues" evidence="1">
    <location>
        <begin position="10"/>
        <end position="20"/>
    </location>
</feature>
<feature type="compositionally biased region" description="Basic residues" evidence="1">
    <location>
        <begin position="27"/>
        <end position="45"/>
    </location>
</feature>
<accession>Q9RCA3</accession>
<sequence length="45" mass="5277">MGKPTFQPNNRKRKKVHGFRARMSTKNGRKVLARRRKKGRKVLSA</sequence>
<reference key="1">
    <citation type="journal article" date="1999" name="Biosci. Biotechnol. Biochem.">
        <title>Replication origin region of the chromosome of alkaliphilic Bacillus halodurans C-125.</title>
        <authorList>
            <person name="Takami H."/>
            <person name="Masui N."/>
            <person name="Nakasone K."/>
            <person name="Horikoshi K."/>
        </authorList>
    </citation>
    <scope>NUCLEOTIDE SEQUENCE [GENOMIC DNA]</scope>
    <source>
        <strain>ATCC BAA-125 / DSM 18197 / FERM 7344 / JCM 9153 / C-125</strain>
    </source>
</reference>
<reference key="2">
    <citation type="journal article" date="2000" name="Nucleic Acids Res.">
        <title>Complete genome sequence of the alkaliphilic bacterium Bacillus halodurans and genomic sequence comparison with Bacillus subtilis.</title>
        <authorList>
            <person name="Takami H."/>
            <person name="Nakasone K."/>
            <person name="Takaki Y."/>
            <person name="Maeno G."/>
            <person name="Sasaki R."/>
            <person name="Masui N."/>
            <person name="Fuji F."/>
            <person name="Hirama C."/>
            <person name="Nakamura Y."/>
            <person name="Ogasawara N."/>
            <person name="Kuhara S."/>
            <person name="Horikoshi K."/>
        </authorList>
    </citation>
    <scope>NUCLEOTIDE SEQUENCE [LARGE SCALE GENOMIC DNA]</scope>
    <source>
        <strain>ATCC BAA-125 / DSM 18197 / FERM 7344 / JCM 9153 / C-125</strain>
    </source>
</reference>